<feature type="chain" id="PRO_1000199185" description="Leucine--tRNA ligase">
    <location>
        <begin position="1"/>
        <end position="877"/>
    </location>
</feature>
<feature type="short sequence motif" description="'HIGH' region">
    <location>
        <begin position="43"/>
        <end position="53"/>
    </location>
</feature>
<feature type="short sequence motif" description="'KMSKS' region">
    <location>
        <begin position="628"/>
        <end position="632"/>
    </location>
</feature>
<feature type="binding site" evidence="1">
    <location>
        <position position="631"/>
    </location>
    <ligand>
        <name>ATP</name>
        <dbReference type="ChEBI" id="CHEBI:30616"/>
    </ligand>
</feature>
<reference key="1">
    <citation type="submission" date="2009-03" db="EMBL/GenBank/DDBJ databases">
        <title>Brucella melitensis ATCC 23457 whole genome shotgun sequencing project.</title>
        <authorList>
            <person name="Setubal J.C."/>
            <person name="Boyle S."/>
            <person name="Crasta O.R."/>
            <person name="Gillespie J.J."/>
            <person name="Kenyon R.W."/>
            <person name="Lu J."/>
            <person name="Mane S."/>
            <person name="Nagrani S."/>
            <person name="Shallom J.M."/>
            <person name="Shallom S."/>
            <person name="Shukla M."/>
            <person name="Snyder E.E."/>
            <person name="Sobral B.W."/>
            <person name="Wattam A.R."/>
            <person name="Will R."/>
            <person name="Williams K."/>
            <person name="Yoo H."/>
            <person name="Munk C."/>
            <person name="Tapia R."/>
            <person name="Han C."/>
            <person name="Detter J.C."/>
            <person name="Bruce D."/>
            <person name="Brettin T.S."/>
        </authorList>
    </citation>
    <scope>NUCLEOTIDE SEQUENCE [LARGE SCALE GENOMIC DNA]</scope>
    <source>
        <strain>ATCC 23457</strain>
    </source>
</reference>
<organism>
    <name type="scientific">Brucella melitensis biotype 2 (strain ATCC 23457)</name>
    <dbReference type="NCBI Taxonomy" id="546272"/>
    <lineage>
        <taxon>Bacteria</taxon>
        <taxon>Pseudomonadati</taxon>
        <taxon>Pseudomonadota</taxon>
        <taxon>Alphaproteobacteria</taxon>
        <taxon>Hyphomicrobiales</taxon>
        <taxon>Brucellaceae</taxon>
        <taxon>Brucella/Ochrobactrum group</taxon>
        <taxon>Brucella</taxon>
    </lineage>
</organism>
<protein>
    <recommendedName>
        <fullName evidence="1">Leucine--tRNA ligase</fullName>
        <ecNumber evidence="1">6.1.1.4</ecNumber>
    </recommendedName>
    <alternativeName>
        <fullName evidence="1">Leucyl-tRNA synthetase</fullName>
        <shortName evidence="1">LeuRS</shortName>
    </alternativeName>
</protein>
<dbReference type="EC" id="6.1.1.4" evidence="1"/>
<dbReference type="EMBL" id="CP001488">
    <property type="protein sequence ID" value="ACO01530.1"/>
    <property type="molecule type" value="Genomic_DNA"/>
</dbReference>
<dbReference type="RefSeq" id="WP_002967933.1">
    <property type="nucleotide sequence ID" value="NC_012441.1"/>
</dbReference>
<dbReference type="SMR" id="C0RF58"/>
<dbReference type="GeneID" id="97533068"/>
<dbReference type="KEGG" id="bmi:BMEA_A1857"/>
<dbReference type="HOGENOM" id="CLU_004427_0_0_5"/>
<dbReference type="Proteomes" id="UP000001748">
    <property type="component" value="Chromosome I"/>
</dbReference>
<dbReference type="GO" id="GO:0005829">
    <property type="term" value="C:cytosol"/>
    <property type="evidence" value="ECO:0007669"/>
    <property type="project" value="TreeGrafter"/>
</dbReference>
<dbReference type="GO" id="GO:0002161">
    <property type="term" value="F:aminoacyl-tRNA deacylase activity"/>
    <property type="evidence" value="ECO:0007669"/>
    <property type="project" value="InterPro"/>
</dbReference>
<dbReference type="GO" id="GO:0005524">
    <property type="term" value="F:ATP binding"/>
    <property type="evidence" value="ECO:0007669"/>
    <property type="project" value="UniProtKB-UniRule"/>
</dbReference>
<dbReference type="GO" id="GO:0004823">
    <property type="term" value="F:leucine-tRNA ligase activity"/>
    <property type="evidence" value="ECO:0007669"/>
    <property type="project" value="UniProtKB-UniRule"/>
</dbReference>
<dbReference type="GO" id="GO:0006429">
    <property type="term" value="P:leucyl-tRNA aminoacylation"/>
    <property type="evidence" value="ECO:0007669"/>
    <property type="project" value="UniProtKB-UniRule"/>
</dbReference>
<dbReference type="CDD" id="cd07958">
    <property type="entry name" value="Anticodon_Ia_Leu_BEm"/>
    <property type="match status" value="1"/>
</dbReference>
<dbReference type="CDD" id="cd00812">
    <property type="entry name" value="LeuRS_core"/>
    <property type="match status" value="1"/>
</dbReference>
<dbReference type="FunFam" id="1.10.730.10:FF:000002">
    <property type="entry name" value="Leucine--tRNA ligase"/>
    <property type="match status" value="1"/>
</dbReference>
<dbReference type="FunFam" id="3.40.50.620:FF:000003">
    <property type="entry name" value="Leucine--tRNA ligase"/>
    <property type="match status" value="1"/>
</dbReference>
<dbReference type="Gene3D" id="2.20.28.290">
    <property type="match status" value="1"/>
</dbReference>
<dbReference type="Gene3D" id="3.10.20.590">
    <property type="match status" value="1"/>
</dbReference>
<dbReference type="Gene3D" id="3.40.50.620">
    <property type="entry name" value="HUPs"/>
    <property type="match status" value="2"/>
</dbReference>
<dbReference type="Gene3D" id="1.10.730.10">
    <property type="entry name" value="Isoleucyl-tRNA Synthetase, Domain 1"/>
    <property type="match status" value="1"/>
</dbReference>
<dbReference type="Gene3D" id="3.90.740.10">
    <property type="entry name" value="Valyl/Leucyl/Isoleucyl-tRNA synthetase, editing domain"/>
    <property type="match status" value="1"/>
</dbReference>
<dbReference type="HAMAP" id="MF_00049_B">
    <property type="entry name" value="Leu_tRNA_synth_B"/>
    <property type="match status" value="1"/>
</dbReference>
<dbReference type="InterPro" id="IPR001412">
    <property type="entry name" value="aa-tRNA-synth_I_CS"/>
</dbReference>
<dbReference type="InterPro" id="IPR002300">
    <property type="entry name" value="aa-tRNA-synth_Ia"/>
</dbReference>
<dbReference type="InterPro" id="IPR002302">
    <property type="entry name" value="Leu-tRNA-ligase"/>
</dbReference>
<dbReference type="InterPro" id="IPR025709">
    <property type="entry name" value="Leu_tRNA-synth_edit"/>
</dbReference>
<dbReference type="InterPro" id="IPR013155">
    <property type="entry name" value="M/V/L/I-tRNA-synth_anticd-bd"/>
</dbReference>
<dbReference type="InterPro" id="IPR015413">
    <property type="entry name" value="Methionyl/Leucyl_tRNA_Synth"/>
</dbReference>
<dbReference type="InterPro" id="IPR014729">
    <property type="entry name" value="Rossmann-like_a/b/a_fold"/>
</dbReference>
<dbReference type="InterPro" id="IPR009080">
    <property type="entry name" value="tRNAsynth_Ia_anticodon-bd"/>
</dbReference>
<dbReference type="InterPro" id="IPR009008">
    <property type="entry name" value="Val/Leu/Ile-tRNA-synth_edit"/>
</dbReference>
<dbReference type="NCBIfam" id="TIGR00396">
    <property type="entry name" value="leuS_bact"/>
    <property type="match status" value="1"/>
</dbReference>
<dbReference type="PANTHER" id="PTHR43740:SF2">
    <property type="entry name" value="LEUCINE--TRNA LIGASE, MITOCHONDRIAL"/>
    <property type="match status" value="1"/>
</dbReference>
<dbReference type="PANTHER" id="PTHR43740">
    <property type="entry name" value="LEUCYL-TRNA SYNTHETASE"/>
    <property type="match status" value="1"/>
</dbReference>
<dbReference type="Pfam" id="PF08264">
    <property type="entry name" value="Anticodon_1"/>
    <property type="match status" value="1"/>
</dbReference>
<dbReference type="Pfam" id="PF00133">
    <property type="entry name" value="tRNA-synt_1"/>
    <property type="match status" value="2"/>
</dbReference>
<dbReference type="Pfam" id="PF13603">
    <property type="entry name" value="tRNA-synt_1_2"/>
    <property type="match status" value="1"/>
</dbReference>
<dbReference type="Pfam" id="PF09334">
    <property type="entry name" value="tRNA-synt_1g"/>
    <property type="match status" value="1"/>
</dbReference>
<dbReference type="PRINTS" id="PR00985">
    <property type="entry name" value="TRNASYNTHLEU"/>
</dbReference>
<dbReference type="SUPFAM" id="SSF47323">
    <property type="entry name" value="Anticodon-binding domain of a subclass of class I aminoacyl-tRNA synthetases"/>
    <property type="match status" value="1"/>
</dbReference>
<dbReference type="SUPFAM" id="SSF52374">
    <property type="entry name" value="Nucleotidylyl transferase"/>
    <property type="match status" value="1"/>
</dbReference>
<dbReference type="SUPFAM" id="SSF50677">
    <property type="entry name" value="ValRS/IleRS/LeuRS editing domain"/>
    <property type="match status" value="1"/>
</dbReference>
<dbReference type="PROSITE" id="PS00178">
    <property type="entry name" value="AA_TRNA_LIGASE_I"/>
    <property type="match status" value="1"/>
</dbReference>
<evidence type="ECO:0000255" key="1">
    <source>
        <dbReference type="HAMAP-Rule" id="MF_00049"/>
    </source>
</evidence>
<sequence>MAAERYNPRVAEAHWQKVWEENRTFETDNSDSREKYYVLEMFPYPSGRIHMGHVRNYAMGDVVARYKRAKGFNVLHPMGWDAFGMPAENAAMQNKVHPKEWTYQNIATMKRQLKSMGLSLDWSREFATCDVEYYHRQQMLFIDLYEKGLVTRKTSKVNWDPVDNTVLANEQVVDGRGWRSGALVEQRELTQWFFKITDFSEELLAGLDTLDQWPEKVRLMQRNWIGKSEGLQVRFALAAGTAPAGFSEVEVYTTRPDTLFGAAFVAISADHPLAKKLSEGNAALSSFIEECHQQGTSLAALETAEKKGFDTGIKVKHPFDDNWELPVYVANFVLMEYGTGAVFGCPAHDQRDLDFANKYKLKVTPVVLPKGEDAASFSIGETAYTDDGVMINSRFLDGMTPEAAFNEVASRLEKTDLVGRPQAVRKVQFRLRDWGISRQRYWGCPIPMIHCESCGVNPVPRADLPVKLPDDVEFDRPGNPLDRHATWRHVKCPKCGGDARRETDTMDTFVDSSWYYTRFTAPWENEPTDRKAADHWLPVDQYIGGIEHAILHLLYSRFFTRAMKVAGHVGVDEPFKGLFTQGMVVHETYKANGQWVSPADIRIEEIDGKRVATMLDSGAPVEIGSIEKMSKSKKNVVDPDDIIASYGADTARWFVLSDSPPERDVIWTEAGAEGAHRFVQRIWRLVAEAAPALKDVAPKAGTQGEALGVSKAAHKAVKAVGDDIEKLAFNRGVARLYELVNTLSGALQQAADGKADAEMKGALREATEMLVLMTAPMMPHLAEQCLAELGGKVAGKETLVARAPWPVFDPALVVENEIVLPVQINGKKRGDLTIARDADQASIQQAVLELDFVKAALNGGSPKKIIVVPQRIVNVVA</sequence>
<gene>
    <name evidence="1" type="primary">leuS</name>
    <name type="ordered locus">BMEA_A1857</name>
</gene>
<proteinExistence type="inferred from homology"/>
<keyword id="KW-0030">Aminoacyl-tRNA synthetase</keyword>
<keyword id="KW-0067">ATP-binding</keyword>
<keyword id="KW-0963">Cytoplasm</keyword>
<keyword id="KW-0436">Ligase</keyword>
<keyword id="KW-0547">Nucleotide-binding</keyword>
<keyword id="KW-0648">Protein biosynthesis</keyword>
<accession>C0RF58</accession>
<name>SYL_BRUMB</name>
<comment type="catalytic activity">
    <reaction evidence="1">
        <text>tRNA(Leu) + L-leucine + ATP = L-leucyl-tRNA(Leu) + AMP + diphosphate</text>
        <dbReference type="Rhea" id="RHEA:11688"/>
        <dbReference type="Rhea" id="RHEA-COMP:9613"/>
        <dbReference type="Rhea" id="RHEA-COMP:9622"/>
        <dbReference type="ChEBI" id="CHEBI:30616"/>
        <dbReference type="ChEBI" id="CHEBI:33019"/>
        <dbReference type="ChEBI" id="CHEBI:57427"/>
        <dbReference type="ChEBI" id="CHEBI:78442"/>
        <dbReference type="ChEBI" id="CHEBI:78494"/>
        <dbReference type="ChEBI" id="CHEBI:456215"/>
        <dbReference type="EC" id="6.1.1.4"/>
    </reaction>
</comment>
<comment type="subcellular location">
    <subcellularLocation>
        <location evidence="1">Cytoplasm</location>
    </subcellularLocation>
</comment>
<comment type="similarity">
    <text evidence="1">Belongs to the class-I aminoacyl-tRNA synthetase family.</text>
</comment>